<protein>
    <recommendedName>
        <fullName evidence="1">ATP synthase subunit c</fullName>
    </recommendedName>
    <alternativeName>
        <fullName evidence="1">ATP synthase F(0) sector subunit c</fullName>
    </alternativeName>
    <alternativeName>
        <fullName evidence="1">F-type ATPase subunit c</fullName>
        <shortName evidence="1">F-ATPase subunit c</shortName>
    </alternativeName>
    <alternativeName>
        <fullName evidence="1">Lipid-binding protein</fullName>
    </alternativeName>
</protein>
<sequence length="81" mass="8082">MDPLTSAASVLSAALAIGLGSLGPGLGQGNAAAAAMEGLARQPEAEDKIRGNLLVSLAFMEALTIYGLVVALVLLFANPFA</sequence>
<gene>
    <name evidence="1" type="primary">atpE</name>
    <name evidence="1" type="synonym">atpH</name>
    <name type="ordered locus">CYB_2677</name>
</gene>
<organism>
    <name type="scientific">Synechococcus sp. (strain JA-2-3B'a(2-13))</name>
    <name type="common">Cyanobacteria bacterium Yellowstone B-Prime</name>
    <dbReference type="NCBI Taxonomy" id="321332"/>
    <lineage>
        <taxon>Bacteria</taxon>
        <taxon>Bacillati</taxon>
        <taxon>Cyanobacteriota</taxon>
        <taxon>Cyanophyceae</taxon>
        <taxon>Synechococcales</taxon>
        <taxon>Synechococcaceae</taxon>
        <taxon>Synechococcus</taxon>
    </lineage>
</organism>
<reference key="1">
    <citation type="journal article" date="2007" name="ISME J.">
        <title>Population level functional diversity in a microbial community revealed by comparative genomic and metagenomic analyses.</title>
        <authorList>
            <person name="Bhaya D."/>
            <person name="Grossman A.R."/>
            <person name="Steunou A.-S."/>
            <person name="Khuri N."/>
            <person name="Cohan F.M."/>
            <person name="Hamamura N."/>
            <person name="Melendrez M.C."/>
            <person name="Bateson M.M."/>
            <person name="Ward D.M."/>
            <person name="Heidelberg J.F."/>
        </authorList>
    </citation>
    <scope>NUCLEOTIDE SEQUENCE [LARGE SCALE GENOMIC DNA]</scope>
    <source>
        <strain>JA-2-3B'a(2-13)</strain>
    </source>
</reference>
<name>ATPL_SYNJB</name>
<evidence type="ECO:0000255" key="1">
    <source>
        <dbReference type="HAMAP-Rule" id="MF_01396"/>
    </source>
</evidence>
<feature type="chain" id="PRO_1000184519" description="ATP synthase subunit c">
    <location>
        <begin position="1"/>
        <end position="81"/>
    </location>
</feature>
<feature type="transmembrane region" description="Helical" evidence="1">
    <location>
        <begin position="7"/>
        <end position="27"/>
    </location>
</feature>
<feature type="transmembrane region" description="Helical" evidence="1">
    <location>
        <begin position="57"/>
        <end position="77"/>
    </location>
</feature>
<feature type="site" description="Reversibly protonated during proton transport" evidence="1">
    <location>
        <position position="61"/>
    </location>
</feature>
<accession>Q2JIF6</accession>
<dbReference type="EMBL" id="CP000240">
    <property type="protein sequence ID" value="ABD03603.1"/>
    <property type="molecule type" value="Genomic_DNA"/>
</dbReference>
<dbReference type="RefSeq" id="WP_011430931.1">
    <property type="nucleotide sequence ID" value="NC_007776.1"/>
</dbReference>
<dbReference type="SMR" id="Q2JIF6"/>
<dbReference type="STRING" id="321332.CYB_2677"/>
<dbReference type="KEGG" id="cyb:CYB_2677"/>
<dbReference type="eggNOG" id="COG0636">
    <property type="taxonomic scope" value="Bacteria"/>
</dbReference>
<dbReference type="HOGENOM" id="CLU_148047_2_0_3"/>
<dbReference type="OrthoDB" id="9810379at2"/>
<dbReference type="Proteomes" id="UP000001938">
    <property type="component" value="Chromosome"/>
</dbReference>
<dbReference type="GO" id="GO:0031676">
    <property type="term" value="C:plasma membrane-derived thylakoid membrane"/>
    <property type="evidence" value="ECO:0007669"/>
    <property type="project" value="UniProtKB-SubCell"/>
</dbReference>
<dbReference type="GO" id="GO:0045259">
    <property type="term" value="C:proton-transporting ATP synthase complex"/>
    <property type="evidence" value="ECO:0007669"/>
    <property type="project" value="UniProtKB-KW"/>
</dbReference>
<dbReference type="GO" id="GO:0033177">
    <property type="term" value="C:proton-transporting two-sector ATPase complex, proton-transporting domain"/>
    <property type="evidence" value="ECO:0007669"/>
    <property type="project" value="InterPro"/>
</dbReference>
<dbReference type="GO" id="GO:0008289">
    <property type="term" value="F:lipid binding"/>
    <property type="evidence" value="ECO:0007669"/>
    <property type="project" value="UniProtKB-KW"/>
</dbReference>
<dbReference type="GO" id="GO:0046933">
    <property type="term" value="F:proton-transporting ATP synthase activity, rotational mechanism"/>
    <property type="evidence" value="ECO:0007669"/>
    <property type="project" value="UniProtKB-UniRule"/>
</dbReference>
<dbReference type="FunFam" id="1.20.20.10:FF:000001">
    <property type="entry name" value="ATP synthase subunit c, chloroplastic"/>
    <property type="match status" value="1"/>
</dbReference>
<dbReference type="Gene3D" id="1.20.20.10">
    <property type="entry name" value="F1F0 ATP synthase subunit C"/>
    <property type="match status" value="1"/>
</dbReference>
<dbReference type="HAMAP" id="MF_01396">
    <property type="entry name" value="ATP_synth_c_bact"/>
    <property type="match status" value="1"/>
</dbReference>
<dbReference type="InterPro" id="IPR005953">
    <property type="entry name" value="ATP_synth_csu_bac/chlpt"/>
</dbReference>
<dbReference type="InterPro" id="IPR000454">
    <property type="entry name" value="ATP_synth_F0_csu"/>
</dbReference>
<dbReference type="InterPro" id="IPR020537">
    <property type="entry name" value="ATP_synth_F0_csu_DDCD_BS"/>
</dbReference>
<dbReference type="InterPro" id="IPR038662">
    <property type="entry name" value="ATP_synth_F0_csu_sf"/>
</dbReference>
<dbReference type="InterPro" id="IPR002379">
    <property type="entry name" value="ATPase_proteolipid_c-like_dom"/>
</dbReference>
<dbReference type="InterPro" id="IPR035921">
    <property type="entry name" value="F/V-ATP_Csub_sf"/>
</dbReference>
<dbReference type="NCBIfam" id="TIGR01260">
    <property type="entry name" value="ATP_synt_c"/>
    <property type="match status" value="1"/>
</dbReference>
<dbReference type="NCBIfam" id="NF005608">
    <property type="entry name" value="PRK07354.1"/>
    <property type="match status" value="1"/>
</dbReference>
<dbReference type="PANTHER" id="PTHR10031">
    <property type="entry name" value="ATP SYNTHASE LIPID-BINDING PROTEIN, MITOCHONDRIAL"/>
    <property type="match status" value="1"/>
</dbReference>
<dbReference type="PANTHER" id="PTHR10031:SF48">
    <property type="entry name" value="ATP SYNTHASE SUBUNIT C, CHLOROPLASTIC"/>
    <property type="match status" value="1"/>
</dbReference>
<dbReference type="Pfam" id="PF00137">
    <property type="entry name" value="ATP-synt_C"/>
    <property type="match status" value="1"/>
</dbReference>
<dbReference type="PRINTS" id="PR00124">
    <property type="entry name" value="ATPASEC"/>
</dbReference>
<dbReference type="SUPFAM" id="SSF81333">
    <property type="entry name" value="F1F0 ATP synthase subunit C"/>
    <property type="match status" value="1"/>
</dbReference>
<dbReference type="PROSITE" id="PS00605">
    <property type="entry name" value="ATPASE_C"/>
    <property type="match status" value="1"/>
</dbReference>
<proteinExistence type="inferred from homology"/>
<keyword id="KW-0066">ATP synthesis</keyword>
<keyword id="KW-0138">CF(0)</keyword>
<keyword id="KW-0375">Hydrogen ion transport</keyword>
<keyword id="KW-0406">Ion transport</keyword>
<keyword id="KW-0446">Lipid-binding</keyword>
<keyword id="KW-0472">Membrane</keyword>
<keyword id="KW-1185">Reference proteome</keyword>
<keyword id="KW-0793">Thylakoid</keyword>
<keyword id="KW-0812">Transmembrane</keyword>
<keyword id="KW-1133">Transmembrane helix</keyword>
<keyword id="KW-0813">Transport</keyword>
<comment type="function">
    <text evidence="1">F(1)F(0) ATP synthase produces ATP from ADP in the presence of a proton or sodium gradient. F-type ATPases consist of two structural domains, F(1) containing the extramembraneous catalytic core and F(0) containing the membrane proton channel, linked together by a central stalk and a peripheral stalk. During catalysis, ATP synthesis in the catalytic domain of F(1) is coupled via a rotary mechanism of the central stalk subunits to proton translocation.</text>
</comment>
<comment type="function">
    <text evidence="1">Key component of the F(0) channel; it plays a direct role in translocation across the membrane. A homomeric c-ring of between 10-14 subunits forms the central stalk rotor element with the F(1) delta and epsilon subunits.</text>
</comment>
<comment type="subunit">
    <text evidence="1">F-type ATPases have 2 components, F(1) - the catalytic core - and F(0) - the membrane proton channel. F(1) has five subunits: alpha(3), beta(3), gamma(1), delta(1), epsilon(1). F(0) has four main subunits: a(1), b(1), b'(1) and c(10-14). The alpha and beta chains form an alternating ring which encloses part of the gamma chain. F(1) is attached to F(0) by a central stalk formed by the gamma and epsilon chains, while a peripheral stalk is formed by the delta, b and b' chains.</text>
</comment>
<comment type="subcellular location">
    <subcellularLocation>
        <location evidence="1">Cellular thylakoid membrane</location>
        <topology evidence="1">Multi-pass membrane protein</topology>
    </subcellularLocation>
</comment>
<comment type="similarity">
    <text evidence="1">Belongs to the ATPase C chain family.</text>
</comment>